<gene>
    <name evidence="1" type="primary">rpmG</name>
    <name type="ordered locus">BAPKO_0412</name>
    <name type="ordered locus">BafPKo_0397.1</name>
</gene>
<dbReference type="EMBL" id="CP000395">
    <property type="protein sequence ID" value="ABH01667.1"/>
    <property type="molecule type" value="Genomic_DNA"/>
</dbReference>
<dbReference type="EMBL" id="CP002933">
    <property type="status" value="NOT_ANNOTATED_CDS"/>
    <property type="molecule type" value="Genomic_DNA"/>
</dbReference>
<dbReference type="RefSeq" id="WP_002556991.1">
    <property type="nucleotide sequence ID" value="NZ_CP160066.1"/>
</dbReference>
<dbReference type="SMR" id="Q0SNB1"/>
<dbReference type="STRING" id="29518.BLA32_02320"/>
<dbReference type="GeneID" id="77265235"/>
<dbReference type="KEGG" id="baf:BAPKO_0412"/>
<dbReference type="OrthoDB" id="9801333at2"/>
<dbReference type="Proteomes" id="UP000005216">
    <property type="component" value="Chromosome"/>
</dbReference>
<dbReference type="GO" id="GO:0005737">
    <property type="term" value="C:cytoplasm"/>
    <property type="evidence" value="ECO:0007669"/>
    <property type="project" value="UniProtKB-ARBA"/>
</dbReference>
<dbReference type="GO" id="GO:1990904">
    <property type="term" value="C:ribonucleoprotein complex"/>
    <property type="evidence" value="ECO:0007669"/>
    <property type="project" value="UniProtKB-KW"/>
</dbReference>
<dbReference type="GO" id="GO:0005840">
    <property type="term" value="C:ribosome"/>
    <property type="evidence" value="ECO:0007669"/>
    <property type="project" value="UniProtKB-KW"/>
</dbReference>
<dbReference type="GO" id="GO:0003735">
    <property type="term" value="F:structural constituent of ribosome"/>
    <property type="evidence" value="ECO:0007669"/>
    <property type="project" value="InterPro"/>
</dbReference>
<dbReference type="GO" id="GO:0006412">
    <property type="term" value="P:translation"/>
    <property type="evidence" value="ECO:0007669"/>
    <property type="project" value="UniProtKB-UniRule"/>
</dbReference>
<dbReference type="Gene3D" id="2.20.28.120">
    <property type="entry name" value="Ribosomal protein L33"/>
    <property type="match status" value="1"/>
</dbReference>
<dbReference type="HAMAP" id="MF_00294">
    <property type="entry name" value="Ribosomal_bL33"/>
    <property type="match status" value="1"/>
</dbReference>
<dbReference type="InterPro" id="IPR001705">
    <property type="entry name" value="Ribosomal_bL33"/>
</dbReference>
<dbReference type="InterPro" id="IPR018264">
    <property type="entry name" value="Ribosomal_bL33_CS"/>
</dbReference>
<dbReference type="InterPro" id="IPR038584">
    <property type="entry name" value="Ribosomal_bL33_sf"/>
</dbReference>
<dbReference type="InterPro" id="IPR011332">
    <property type="entry name" value="Ribosomal_zn-bd"/>
</dbReference>
<dbReference type="NCBIfam" id="NF001764">
    <property type="entry name" value="PRK00504.1"/>
    <property type="match status" value="1"/>
</dbReference>
<dbReference type="NCBIfam" id="NF001860">
    <property type="entry name" value="PRK00595.1"/>
    <property type="match status" value="1"/>
</dbReference>
<dbReference type="NCBIfam" id="TIGR01023">
    <property type="entry name" value="rpmG_bact"/>
    <property type="match status" value="1"/>
</dbReference>
<dbReference type="PANTHER" id="PTHR43168">
    <property type="entry name" value="50S RIBOSOMAL PROTEIN L33, CHLOROPLASTIC"/>
    <property type="match status" value="1"/>
</dbReference>
<dbReference type="PANTHER" id="PTHR43168:SF2">
    <property type="entry name" value="LARGE RIBOSOMAL SUBUNIT PROTEIN BL33C"/>
    <property type="match status" value="1"/>
</dbReference>
<dbReference type="Pfam" id="PF00471">
    <property type="entry name" value="Ribosomal_L33"/>
    <property type="match status" value="1"/>
</dbReference>
<dbReference type="SUPFAM" id="SSF57829">
    <property type="entry name" value="Zn-binding ribosomal proteins"/>
    <property type="match status" value="1"/>
</dbReference>
<dbReference type="PROSITE" id="PS00582">
    <property type="entry name" value="RIBOSOMAL_L33"/>
    <property type="match status" value="1"/>
</dbReference>
<evidence type="ECO:0000255" key="1">
    <source>
        <dbReference type="HAMAP-Rule" id="MF_00294"/>
    </source>
</evidence>
<evidence type="ECO:0000305" key="2"/>
<accession>Q0SNB1</accession>
<proteinExistence type="inferred from homology"/>
<protein>
    <recommendedName>
        <fullName evidence="1">Large ribosomal subunit protein bL33</fullName>
    </recommendedName>
    <alternativeName>
        <fullName evidence="2">50S ribosomal protein L33</fullName>
    </alternativeName>
</protein>
<organism>
    <name type="scientific">Borreliella afzelii (strain PKo)</name>
    <name type="common">Borrelia afzelii</name>
    <dbReference type="NCBI Taxonomy" id="390236"/>
    <lineage>
        <taxon>Bacteria</taxon>
        <taxon>Pseudomonadati</taxon>
        <taxon>Spirochaetota</taxon>
        <taxon>Spirochaetia</taxon>
        <taxon>Spirochaetales</taxon>
        <taxon>Borreliaceae</taxon>
        <taxon>Borreliella</taxon>
    </lineage>
</organism>
<reference key="1">
    <citation type="journal article" date="2006" name="BMC Genomics">
        <title>Comparative genome analysis: selection pressure on the Borrelia vls cassettes is essential for infectivity.</title>
        <authorList>
            <person name="Gloeckner G."/>
            <person name="Schulte-Spechtel U."/>
            <person name="Schilhabel M."/>
            <person name="Felder M."/>
            <person name="Suehnel J."/>
            <person name="Wilske B."/>
            <person name="Platzer M."/>
        </authorList>
    </citation>
    <scope>NUCLEOTIDE SEQUENCE [LARGE SCALE GENOMIC DNA]</scope>
    <source>
        <strain>PKo</strain>
    </source>
</reference>
<reference key="2">
    <citation type="journal article" date="2011" name="J. Bacteriol.">
        <title>Whole-genome sequences of two Borrelia afzelii and two Borrelia garinii Lyme disease agent isolates.</title>
        <authorList>
            <person name="Casjens S.R."/>
            <person name="Mongodin E.F."/>
            <person name="Qiu W.G."/>
            <person name="Dunn J.J."/>
            <person name="Luft B.J."/>
            <person name="Fraser-Liggett C.M."/>
            <person name="Schutzer S.E."/>
        </authorList>
    </citation>
    <scope>NUCLEOTIDE SEQUENCE [LARGE SCALE GENOMIC DNA]</scope>
    <source>
        <strain>PKo</strain>
    </source>
</reference>
<sequence length="59" mass="6900">MGKKKGKGAVELISLICEETGIRNYTTTKNRRNKQEKLELMKYCPKLRKHTLHKEGKIK</sequence>
<keyword id="KW-0687">Ribonucleoprotein</keyword>
<keyword id="KW-0689">Ribosomal protein</keyword>
<name>RL33_BORAP</name>
<feature type="chain" id="PRO_1000004151" description="Large ribosomal subunit protein bL33">
    <location>
        <begin position="1"/>
        <end position="59"/>
    </location>
</feature>
<comment type="similarity">
    <text evidence="1">Belongs to the bacterial ribosomal protein bL33 family.</text>
</comment>